<name>CAIB_SALCH</name>
<comment type="function">
    <text evidence="1">Catalyzes the reversible transfer of the CoA moiety from gamma-butyrobetainyl-CoA to L-carnitine to generate L-carnitinyl-CoA and gamma-butyrobetaine. Is also able to catalyze the reversible transfer of the CoA moiety from gamma-butyrobetainyl-CoA or L-carnitinyl-CoA to crotonobetaine to generate crotonobetainyl-CoA.</text>
</comment>
<comment type="catalytic activity">
    <reaction evidence="1">
        <text>crotonobetainyl-CoA + (R)-carnitine = crotonobetaine + (R)-carnitinyl-CoA</text>
        <dbReference type="Rhea" id="RHEA:28526"/>
        <dbReference type="ChEBI" id="CHEBI:16347"/>
        <dbReference type="ChEBI" id="CHEBI:17237"/>
        <dbReference type="ChEBI" id="CHEBI:60932"/>
        <dbReference type="ChEBI" id="CHEBI:60933"/>
        <dbReference type="EC" id="2.8.3.21"/>
    </reaction>
</comment>
<comment type="catalytic activity">
    <reaction evidence="1">
        <text>4-(trimethylamino)butanoyl-CoA + (R)-carnitine = (R)-carnitinyl-CoA + 4-(trimethylamino)butanoate</text>
        <dbReference type="Rhea" id="RHEA:28418"/>
        <dbReference type="ChEBI" id="CHEBI:16244"/>
        <dbReference type="ChEBI" id="CHEBI:16347"/>
        <dbReference type="ChEBI" id="CHEBI:60932"/>
        <dbReference type="ChEBI" id="CHEBI:61513"/>
        <dbReference type="EC" id="2.8.3.21"/>
    </reaction>
</comment>
<comment type="pathway">
    <text evidence="1">Amine and polyamine metabolism; carnitine metabolism.</text>
</comment>
<comment type="subunit">
    <text evidence="1">Homodimer.</text>
</comment>
<comment type="subcellular location">
    <subcellularLocation>
        <location evidence="1">Cytoplasm</location>
    </subcellularLocation>
</comment>
<comment type="similarity">
    <text evidence="1">Belongs to the CoA-transferase III family. CaiB subfamily.</text>
</comment>
<sequence>MNHLPMPTFGPLAGVRVVFSGIEIAGPFAGQMFAEWGAEVIWIENVAWADTIRVQPNYPQLSRRNLHALSLNIFKDEGREAFLKLMETTDIFIEASKGPAFARRGITDEVLWEHNPKLVIAHLSGFGQYGTEEYTNLPAYNTIAQAFSGYLIQNGDVDQPMPAFPYTADYFSGMTATTAALAALHKVRETGKGESIDIAMYEVMLRMGQYFMMDYFNGGEICPRMTKGKDPYYAGCGLYKCADGYIVMELVGITQINECFKDIGLAHILGTPEVPEGTQLIHRVECPYGPLVEEKLDAWLATHTIADVQARFAELNIACAKVLTIPELEGNPQYVARESITQWQTMDGRTCKGPNIMPKFKNNPGKIWRGMPSHGMDTAAILKNIGYSEADIKELVGKGLAKVED</sequence>
<keyword id="KW-0963">Cytoplasm</keyword>
<keyword id="KW-0808">Transferase</keyword>
<accession>Q57TI9</accession>
<protein>
    <recommendedName>
        <fullName evidence="1">L-carnitine CoA-transferase</fullName>
        <ecNumber evidence="1">2.8.3.21</ecNumber>
    </recommendedName>
    <alternativeName>
        <fullName evidence="1">Crotonobetainyl-CoA:carnitine CoA-transferase</fullName>
    </alternativeName>
</protein>
<reference key="1">
    <citation type="journal article" date="2005" name="Nucleic Acids Res.">
        <title>The genome sequence of Salmonella enterica serovar Choleraesuis, a highly invasive and resistant zoonotic pathogen.</title>
        <authorList>
            <person name="Chiu C.-H."/>
            <person name="Tang P."/>
            <person name="Chu C."/>
            <person name="Hu S."/>
            <person name="Bao Q."/>
            <person name="Yu J."/>
            <person name="Chou Y.-Y."/>
            <person name="Wang H.-S."/>
            <person name="Lee Y.-S."/>
        </authorList>
    </citation>
    <scope>NUCLEOTIDE SEQUENCE [LARGE SCALE GENOMIC DNA]</scope>
    <source>
        <strain>SC-B67</strain>
    </source>
</reference>
<organism>
    <name type="scientific">Salmonella choleraesuis (strain SC-B67)</name>
    <dbReference type="NCBI Taxonomy" id="321314"/>
    <lineage>
        <taxon>Bacteria</taxon>
        <taxon>Pseudomonadati</taxon>
        <taxon>Pseudomonadota</taxon>
        <taxon>Gammaproteobacteria</taxon>
        <taxon>Enterobacterales</taxon>
        <taxon>Enterobacteriaceae</taxon>
        <taxon>Salmonella</taxon>
    </lineage>
</organism>
<feature type="chain" id="PRO_0000300981" description="L-carnitine CoA-transferase">
    <location>
        <begin position="1"/>
        <end position="405"/>
    </location>
</feature>
<feature type="active site" description="Nucleophile" evidence="1">
    <location>
        <position position="169"/>
    </location>
</feature>
<feature type="binding site" evidence="1">
    <location>
        <position position="97"/>
    </location>
    <ligand>
        <name>CoA</name>
        <dbReference type="ChEBI" id="CHEBI:57287"/>
    </ligand>
</feature>
<feature type="binding site" evidence="1">
    <location>
        <position position="104"/>
    </location>
    <ligand>
        <name>CoA</name>
        <dbReference type="ChEBI" id="CHEBI:57287"/>
    </ligand>
</feature>
<dbReference type="EC" id="2.8.3.21" evidence="1"/>
<dbReference type="EMBL" id="AE017220">
    <property type="protein sequence ID" value="AAX63972.1"/>
    <property type="molecule type" value="Genomic_DNA"/>
</dbReference>
<dbReference type="RefSeq" id="WP_001016212.1">
    <property type="nucleotide sequence ID" value="NC_006905.1"/>
</dbReference>
<dbReference type="SMR" id="Q57TI9"/>
<dbReference type="KEGG" id="sec:SCH_0066"/>
<dbReference type="HOGENOM" id="CLU_033975_2_0_6"/>
<dbReference type="UniPathway" id="UPA00117"/>
<dbReference type="Proteomes" id="UP000000538">
    <property type="component" value="Chromosome"/>
</dbReference>
<dbReference type="GO" id="GO:0005737">
    <property type="term" value="C:cytoplasm"/>
    <property type="evidence" value="ECO:0007669"/>
    <property type="project" value="UniProtKB-SubCell"/>
</dbReference>
<dbReference type="GO" id="GO:0008735">
    <property type="term" value="F:L-carnitine CoA-transferase activity"/>
    <property type="evidence" value="ECO:0007669"/>
    <property type="project" value="RHEA"/>
</dbReference>
<dbReference type="GO" id="GO:0009437">
    <property type="term" value="P:carnitine metabolic process"/>
    <property type="evidence" value="ECO:0007669"/>
    <property type="project" value="UniProtKB-UniRule"/>
</dbReference>
<dbReference type="FunFam" id="3.30.1540.10:FF:000001">
    <property type="entry name" value="L-carnitine CoA-transferase"/>
    <property type="match status" value="1"/>
</dbReference>
<dbReference type="Gene3D" id="3.40.50.10540">
    <property type="entry name" value="Crotonobetainyl-coa:carnitine coa-transferase, domain 1"/>
    <property type="match status" value="1"/>
</dbReference>
<dbReference type="Gene3D" id="3.30.1540.10">
    <property type="entry name" value="formyl-coa transferase, domain 3"/>
    <property type="match status" value="1"/>
</dbReference>
<dbReference type="HAMAP" id="MF_01050">
    <property type="entry name" value="CaiB"/>
    <property type="match status" value="1"/>
</dbReference>
<dbReference type="InterPro" id="IPR050509">
    <property type="entry name" value="CoA-transferase_III"/>
</dbReference>
<dbReference type="InterPro" id="IPR023452">
    <property type="entry name" value="CoA-Trfase_CaiB"/>
</dbReference>
<dbReference type="InterPro" id="IPR003673">
    <property type="entry name" value="CoA-Trfase_fam_III"/>
</dbReference>
<dbReference type="InterPro" id="IPR044855">
    <property type="entry name" value="CoA-Trfase_III_dom3_sf"/>
</dbReference>
<dbReference type="InterPro" id="IPR023606">
    <property type="entry name" value="CoA-Trfase_III_dom_1_sf"/>
</dbReference>
<dbReference type="NCBIfam" id="NF002914">
    <property type="entry name" value="PRK03525.1"/>
    <property type="match status" value="1"/>
</dbReference>
<dbReference type="PANTHER" id="PTHR48228:SF6">
    <property type="entry name" value="L-CARNITINE COA-TRANSFERASE"/>
    <property type="match status" value="1"/>
</dbReference>
<dbReference type="PANTHER" id="PTHR48228">
    <property type="entry name" value="SUCCINYL-COA--D-CITRAMALATE COA-TRANSFERASE"/>
    <property type="match status" value="1"/>
</dbReference>
<dbReference type="Pfam" id="PF02515">
    <property type="entry name" value="CoA_transf_3"/>
    <property type="match status" value="1"/>
</dbReference>
<dbReference type="SUPFAM" id="SSF89796">
    <property type="entry name" value="CoA-transferase family III (CaiB/BaiF)"/>
    <property type="match status" value="1"/>
</dbReference>
<gene>
    <name evidence="1" type="primary">caiB</name>
    <name type="ordered locus">SCH_0066</name>
</gene>
<proteinExistence type="inferred from homology"/>
<evidence type="ECO:0000255" key="1">
    <source>
        <dbReference type="HAMAP-Rule" id="MF_01050"/>
    </source>
</evidence>